<evidence type="ECO:0000255" key="1">
    <source>
        <dbReference type="HAMAP-Rule" id="MF_00360"/>
    </source>
</evidence>
<evidence type="ECO:0000256" key="2">
    <source>
        <dbReference type="SAM" id="MobiDB-lite"/>
    </source>
</evidence>
<evidence type="ECO:0000305" key="3"/>
<protein>
    <recommendedName>
        <fullName evidence="1">Small ribosomal subunit protein bS6</fullName>
    </recommendedName>
    <alternativeName>
        <fullName evidence="3">30S ribosomal protein S6</fullName>
    </alternativeName>
</protein>
<proteinExistence type="inferred from homology"/>
<name>RS6_ECO45</name>
<accession>B7MLK5</accession>
<organism>
    <name type="scientific">Escherichia coli O45:K1 (strain S88 / ExPEC)</name>
    <dbReference type="NCBI Taxonomy" id="585035"/>
    <lineage>
        <taxon>Bacteria</taxon>
        <taxon>Pseudomonadati</taxon>
        <taxon>Pseudomonadota</taxon>
        <taxon>Gammaproteobacteria</taxon>
        <taxon>Enterobacterales</taxon>
        <taxon>Enterobacteriaceae</taxon>
        <taxon>Escherichia</taxon>
    </lineage>
</organism>
<dbReference type="EMBL" id="CU928161">
    <property type="protein sequence ID" value="CAR05935.1"/>
    <property type="molecule type" value="Genomic_DNA"/>
</dbReference>
<dbReference type="RefSeq" id="WP_001216676.1">
    <property type="nucleotide sequence ID" value="NC_011742.1"/>
</dbReference>
<dbReference type="SMR" id="B7MLK5"/>
<dbReference type="GeneID" id="93777623"/>
<dbReference type="KEGG" id="ecz:ECS88_4786"/>
<dbReference type="HOGENOM" id="CLU_113441_6_1_6"/>
<dbReference type="Proteomes" id="UP000000747">
    <property type="component" value="Chromosome"/>
</dbReference>
<dbReference type="GO" id="GO:0022627">
    <property type="term" value="C:cytosolic small ribosomal subunit"/>
    <property type="evidence" value="ECO:0007669"/>
    <property type="project" value="TreeGrafter"/>
</dbReference>
<dbReference type="GO" id="GO:0070181">
    <property type="term" value="F:small ribosomal subunit rRNA binding"/>
    <property type="evidence" value="ECO:0007669"/>
    <property type="project" value="TreeGrafter"/>
</dbReference>
<dbReference type="GO" id="GO:0003735">
    <property type="term" value="F:structural constituent of ribosome"/>
    <property type="evidence" value="ECO:0007669"/>
    <property type="project" value="InterPro"/>
</dbReference>
<dbReference type="GO" id="GO:0006412">
    <property type="term" value="P:translation"/>
    <property type="evidence" value="ECO:0007669"/>
    <property type="project" value="UniProtKB-UniRule"/>
</dbReference>
<dbReference type="CDD" id="cd00473">
    <property type="entry name" value="bS6"/>
    <property type="match status" value="1"/>
</dbReference>
<dbReference type="FunFam" id="3.30.70.60:FF:000003">
    <property type="entry name" value="30S ribosomal protein S6"/>
    <property type="match status" value="1"/>
</dbReference>
<dbReference type="Gene3D" id="3.30.70.60">
    <property type="match status" value="1"/>
</dbReference>
<dbReference type="HAMAP" id="MF_00360">
    <property type="entry name" value="Ribosomal_bS6"/>
    <property type="match status" value="1"/>
</dbReference>
<dbReference type="InterPro" id="IPR000529">
    <property type="entry name" value="Ribosomal_bS6"/>
</dbReference>
<dbReference type="InterPro" id="IPR020815">
    <property type="entry name" value="Ribosomal_bS6_CS"/>
</dbReference>
<dbReference type="InterPro" id="IPR035980">
    <property type="entry name" value="Ribosomal_bS6_sf"/>
</dbReference>
<dbReference type="InterPro" id="IPR020814">
    <property type="entry name" value="Ribosomal_S6_plastid/chlpt"/>
</dbReference>
<dbReference type="InterPro" id="IPR014717">
    <property type="entry name" value="Transl_elong_EF1B/ribsomal_bS6"/>
</dbReference>
<dbReference type="NCBIfam" id="TIGR00166">
    <property type="entry name" value="S6"/>
    <property type="match status" value="1"/>
</dbReference>
<dbReference type="PANTHER" id="PTHR21011">
    <property type="entry name" value="MITOCHONDRIAL 28S RIBOSOMAL PROTEIN S6"/>
    <property type="match status" value="1"/>
</dbReference>
<dbReference type="PANTHER" id="PTHR21011:SF1">
    <property type="entry name" value="SMALL RIBOSOMAL SUBUNIT PROTEIN BS6M"/>
    <property type="match status" value="1"/>
</dbReference>
<dbReference type="Pfam" id="PF01250">
    <property type="entry name" value="Ribosomal_S6"/>
    <property type="match status" value="1"/>
</dbReference>
<dbReference type="SUPFAM" id="SSF54995">
    <property type="entry name" value="Ribosomal protein S6"/>
    <property type="match status" value="1"/>
</dbReference>
<dbReference type="PROSITE" id="PS01048">
    <property type="entry name" value="RIBOSOMAL_S6"/>
    <property type="match status" value="1"/>
</dbReference>
<reference key="1">
    <citation type="journal article" date="2009" name="PLoS Genet.">
        <title>Organised genome dynamics in the Escherichia coli species results in highly diverse adaptive paths.</title>
        <authorList>
            <person name="Touchon M."/>
            <person name="Hoede C."/>
            <person name="Tenaillon O."/>
            <person name="Barbe V."/>
            <person name="Baeriswyl S."/>
            <person name="Bidet P."/>
            <person name="Bingen E."/>
            <person name="Bonacorsi S."/>
            <person name="Bouchier C."/>
            <person name="Bouvet O."/>
            <person name="Calteau A."/>
            <person name="Chiapello H."/>
            <person name="Clermont O."/>
            <person name="Cruveiller S."/>
            <person name="Danchin A."/>
            <person name="Diard M."/>
            <person name="Dossat C."/>
            <person name="Karoui M.E."/>
            <person name="Frapy E."/>
            <person name="Garry L."/>
            <person name="Ghigo J.M."/>
            <person name="Gilles A.M."/>
            <person name="Johnson J."/>
            <person name="Le Bouguenec C."/>
            <person name="Lescat M."/>
            <person name="Mangenot S."/>
            <person name="Martinez-Jehanne V."/>
            <person name="Matic I."/>
            <person name="Nassif X."/>
            <person name="Oztas S."/>
            <person name="Petit M.A."/>
            <person name="Pichon C."/>
            <person name="Rouy Z."/>
            <person name="Ruf C.S."/>
            <person name="Schneider D."/>
            <person name="Tourret J."/>
            <person name="Vacherie B."/>
            <person name="Vallenet D."/>
            <person name="Medigue C."/>
            <person name="Rocha E.P.C."/>
            <person name="Denamur E."/>
        </authorList>
    </citation>
    <scope>NUCLEOTIDE SEQUENCE [LARGE SCALE GENOMIC DNA]</scope>
    <source>
        <strain>S88 / ExPEC</strain>
    </source>
</reference>
<comment type="function">
    <text evidence="1">Binds together with bS18 to 16S ribosomal RNA.</text>
</comment>
<comment type="similarity">
    <text evidence="1">Belongs to the bacterial ribosomal protein bS6 family.</text>
</comment>
<feature type="chain" id="PRO_1000120743" description="Small ribosomal subunit protein bS6">
    <location>
        <begin position="1"/>
        <end position="131"/>
    </location>
</feature>
<feature type="region of interest" description="Disordered" evidence="2">
    <location>
        <begin position="98"/>
        <end position="131"/>
    </location>
</feature>
<feature type="compositionally biased region" description="Basic and acidic residues" evidence="2">
    <location>
        <begin position="104"/>
        <end position="116"/>
    </location>
</feature>
<feature type="compositionally biased region" description="Acidic residues" evidence="2">
    <location>
        <begin position="120"/>
        <end position="131"/>
    </location>
</feature>
<feature type="modified residue" description="N6-acetyllysine" evidence="1">
    <location>
        <position position="93"/>
    </location>
</feature>
<sequence>MRHYEIVFMVHPDQSEQVPGMIERYTAAITGAEGKIHRLEDWGRRQLAYPINKLHKAHYVLMNVEAPQEVIDELETTFRFNDAVIRSMVMRTKHAVTEASPMVKAKDERRERRDDFANETADDAEAGDSEE</sequence>
<gene>
    <name evidence="1" type="primary">rpsF</name>
    <name type="ordered locus">ECS88_4786</name>
</gene>
<keyword id="KW-0007">Acetylation</keyword>
<keyword id="KW-1185">Reference proteome</keyword>
<keyword id="KW-0687">Ribonucleoprotein</keyword>
<keyword id="KW-0689">Ribosomal protein</keyword>
<keyword id="KW-0694">RNA-binding</keyword>
<keyword id="KW-0699">rRNA-binding</keyword>